<reference key="1">
    <citation type="journal article" date="1992" name="Insect Biochem. Mol. Biol.">
        <title>Isolation, identification and synthesis of locustamyotropin III and IV, two additional neuropeptides of Locusta migratoria: members of the locustamyotropin peptide family.</title>
        <authorList>
            <person name="Schoofs L."/>
            <person name="Holman G.M."/>
            <person name="Hayes T.K."/>
            <person name="Nachman R.J."/>
            <person name="Kochansky J.P."/>
            <person name="de Loof A."/>
        </authorList>
    </citation>
    <scope>PROTEIN SEQUENCE</scope>
    <scope>AMIDATION AT LEU-13</scope>
    <scope>SYNTHESIS</scope>
    <source>
        <tissue>Brain</tissue>
    </source>
</reference>
<name>LMT4_LOCMI</name>
<evidence type="ECO:0000269" key="1">
    <source ref="1"/>
</evidence>
<evidence type="ECO:0000305" key="2"/>
<comment type="function">
    <text>Potent mediator of visceral muscle contractile activity (myotropic activity). LOM-MT IV seems to be a more potent muscle stimulator than LOM-MT I, II and III.</text>
</comment>
<comment type="subcellular location">
    <subcellularLocation>
        <location>Secreted</location>
    </subcellularLocation>
</comment>
<comment type="similarity">
    <text evidence="2">Belongs to the pyrokinin family.</text>
</comment>
<accession>P41490</accession>
<dbReference type="PIR" id="B61620">
    <property type="entry name" value="B61620"/>
</dbReference>
<dbReference type="GO" id="GO:0005576">
    <property type="term" value="C:extracellular region"/>
    <property type="evidence" value="ECO:0007669"/>
    <property type="project" value="UniProtKB-SubCell"/>
</dbReference>
<dbReference type="GO" id="GO:0005184">
    <property type="term" value="F:neuropeptide hormone activity"/>
    <property type="evidence" value="ECO:0007669"/>
    <property type="project" value="InterPro"/>
</dbReference>
<dbReference type="GO" id="GO:0007218">
    <property type="term" value="P:neuropeptide signaling pathway"/>
    <property type="evidence" value="ECO:0007669"/>
    <property type="project" value="UniProtKB-KW"/>
</dbReference>
<dbReference type="InterPro" id="IPR001484">
    <property type="entry name" value="Pyrokinin_CS"/>
</dbReference>
<dbReference type="PROSITE" id="PS00539">
    <property type="entry name" value="PYROKININ"/>
    <property type="match status" value="1"/>
</dbReference>
<protein>
    <recommendedName>
        <fullName>Locustamyotropin-4</fullName>
    </recommendedName>
    <alternativeName>
        <fullName>Lom-MT-4</fullName>
    </alternativeName>
</protein>
<feature type="peptide" id="PRO_0000044316" description="Locustamyotropin-4">
    <location>
        <begin position="1"/>
        <end position="13"/>
    </location>
</feature>
<feature type="modified residue" description="Leucine amide" evidence="1">
    <location>
        <position position="13"/>
    </location>
</feature>
<keyword id="KW-0027">Amidation</keyword>
<keyword id="KW-0903">Direct protein sequencing</keyword>
<keyword id="KW-0527">Neuropeptide</keyword>
<keyword id="KW-0964">Secreted</keyword>
<sequence>RLHQNGMPFSPRL</sequence>
<proteinExistence type="evidence at protein level"/>
<organism>
    <name type="scientific">Locusta migratoria</name>
    <name type="common">Migratory locust</name>
    <dbReference type="NCBI Taxonomy" id="7004"/>
    <lineage>
        <taxon>Eukaryota</taxon>
        <taxon>Metazoa</taxon>
        <taxon>Ecdysozoa</taxon>
        <taxon>Arthropoda</taxon>
        <taxon>Hexapoda</taxon>
        <taxon>Insecta</taxon>
        <taxon>Pterygota</taxon>
        <taxon>Neoptera</taxon>
        <taxon>Polyneoptera</taxon>
        <taxon>Orthoptera</taxon>
        <taxon>Caelifera</taxon>
        <taxon>Acrididea</taxon>
        <taxon>Acridomorpha</taxon>
        <taxon>Acridoidea</taxon>
        <taxon>Acrididae</taxon>
        <taxon>Oedipodinae</taxon>
        <taxon>Locusta</taxon>
    </lineage>
</organism>